<name>CAF17_ASPCL</name>
<organism>
    <name type="scientific">Aspergillus clavatus (strain ATCC 1007 / CBS 513.65 / DSM 816 / NCTC 3887 / NRRL 1 / QM 1276 / 107)</name>
    <dbReference type="NCBI Taxonomy" id="344612"/>
    <lineage>
        <taxon>Eukaryota</taxon>
        <taxon>Fungi</taxon>
        <taxon>Dikarya</taxon>
        <taxon>Ascomycota</taxon>
        <taxon>Pezizomycotina</taxon>
        <taxon>Eurotiomycetes</taxon>
        <taxon>Eurotiomycetidae</taxon>
        <taxon>Eurotiales</taxon>
        <taxon>Aspergillaceae</taxon>
        <taxon>Aspergillus</taxon>
        <taxon>Aspergillus subgen. Fumigati</taxon>
    </lineage>
</organism>
<sequence>MRPTTSTQNICARCLNRGRHFSTNVQHRAQQPSNAIVSSPPQTGYARLTNRGLISITGIDSTTFLQGLITQNMLVANDPNRAIRRTGTYAAFLNSQGRVLNDAFIYPMPRVDGGAAAPEDPAWLVEVDKCEVSSLMKHLKKHKLRSKLKLRALEDGERTVWSSWKDHTEPRWAAYNLESESSSQFSPSSPIAGCVDTRAPGFGSRIVTPGGEDLRMHFPDEAQVAGGEVDLGAYTVRRMLHGIAEGQSEIIRESALPLECNMDMARGVDFRKGCYVGQELTIRTHHTGVVRKRIVPVQLYTGAQDTVPVDGLPAYDSSVEVPSPPSGTNISKVGARKGRSAGKFLGGVGNIGLALCRLEMMTDIVLTSEGTQYNPETEFKVSWTAADEGPVGPSDSGEVKIKAFVPPWLREYIASGGVRNTARKIDNEDAQRARELLYQLDEEEELRRNE</sequence>
<reference key="1">
    <citation type="journal article" date="2008" name="PLoS Genet.">
        <title>Genomic islands in the pathogenic filamentous fungus Aspergillus fumigatus.</title>
        <authorList>
            <person name="Fedorova N.D."/>
            <person name="Khaldi N."/>
            <person name="Joardar V.S."/>
            <person name="Maiti R."/>
            <person name="Amedeo P."/>
            <person name="Anderson M.J."/>
            <person name="Crabtree J."/>
            <person name="Silva J.C."/>
            <person name="Badger J.H."/>
            <person name="Albarraq A."/>
            <person name="Angiuoli S."/>
            <person name="Bussey H."/>
            <person name="Bowyer P."/>
            <person name="Cotty P.J."/>
            <person name="Dyer P.S."/>
            <person name="Egan A."/>
            <person name="Galens K."/>
            <person name="Fraser-Liggett C.M."/>
            <person name="Haas B.J."/>
            <person name="Inman J.M."/>
            <person name="Kent R."/>
            <person name="Lemieux S."/>
            <person name="Malavazi I."/>
            <person name="Orvis J."/>
            <person name="Roemer T."/>
            <person name="Ronning C.M."/>
            <person name="Sundaram J.P."/>
            <person name="Sutton G."/>
            <person name="Turner G."/>
            <person name="Venter J.C."/>
            <person name="White O.R."/>
            <person name="Whitty B.R."/>
            <person name="Youngman P."/>
            <person name="Wolfe K.H."/>
            <person name="Goldman G.H."/>
            <person name="Wortman J.R."/>
            <person name="Jiang B."/>
            <person name="Denning D.W."/>
            <person name="Nierman W.C."/>
        </authorList>
    </citation>
    <scope>NUCLEOTIDE SEQUENCE [LARGE SCALE GENOMIC DNA]</scope>
    <source>
        <strain>ATCC 1007 / CBS 513.65 / DSM 816 / NCTC 3887 / NRRL 1 / QM 1276 / 107</strain>
    </source>
</reference>
<evidence type="ECO:0000250" key="1">
    <source>
        <dbReference type="UniProtKB" id="P47158"/>
    </source>
</evidence>
<evidence type="ECO:0000255" key="2"/>
<evidence type="ECO:0000305" key="3"/>
<gene>
    <name type="primary">caf17</name>
    <name type="ORF">ACLA_015490</name>
</gene>
<protein>
    <recommendedName>
        <fullName>Iron-sulfur cluster assembly factor IBA57 homolog, mitochondrial</fullName>
    </recommendedName>
</protein>
<feature type="transit peptide" description="Mitochondrion" evidence="2">
    <location>
        <begin position="1"/>
        <end position="21"/>
    </location>
</feature>
<feature type="chain" id="PRO_0000301690" description="Iron-sulfur cluster assembly factor IBA57 homolog, mitochondrial">
    <location>
        <begin position="22"/>
        <end position="450"/>
    </location>
</feature>
<dbReference type="EMBL" id="DS027049">
    <property type="protein sequence ID" value="EAW13107.1"/>
    <property type="molecule type" value="Genomic_DNA"/>
</dbReference>
<dbReference type="RefSeq" id="XP_001274533.1">
    <property type="nucleotide sequence ID" value="XM_001274532.1"/>
</dbReference>
<dbReference type="SMR" id="A1CBI9"/>
<dbReference type="STRING" id="344612.A1CBI9"/>
<dbReference type="EnsemblFungi" id="EAW13107">
    <property type="protein sequence ID" value="EAW13107"/>
    <property type="gene ID" value="ACLA_015490"/>
</dbReference>
<dbReference type="GeneID" id="4706919"/>
<dbReference type="KEGG" id="act:ACLA_015490"/>
<dbReference type="VEuPathDB" id="FungiDB:ACLA_015490"/>
<dbReference type="eggNOG" id="KOG2929">
    <property type="taxonomic scope" value="Eukaryota"/>
</dbReference>
<dbReference type="HOGENOM" id="CLU_007884_7_0_1"/>
<dbReference type="OMA" id="NMLVAND"/>
<dbReference type="OrthoDB" id="191995at2759"/>
<dbReference type="Proteomes" id="UP000006701">
    <property type="component" value="Unassembled WGS sequence"/>
</dbReference>
<dbReference type="GO" id="GO:0005759">
    <property type="term" value="C:mitochondrial matrix"/>
    <property type="evidence" value="ECO:0007669"/>
    <property type="project" value="TreeGrafter"/>
</dbReference>
<dbReference type="GO" id="GO:0016740">
    <property type="term" value="F:transferase activity"/>
    <property type="evidence" value="ECO:0007669"/>
    <property type="project" value="UniProtKB-KW"/>
</dbReference>
<dbReference type="GO" id="GO:0016226">
    <property type="term" value="P:iron-sulfur cluster assembly"/>
    <property type="evidence" value="ECO:0007669"/>
    <property type="project" value="TreeGrafter"/>
</dbReference>
<dbReference type="FunFam" id="3.30.1360.120:FF:000028">
    <property type="entry name" value="Putative transferase caf17, mitochondrial"/>
    <property type="match status" value="1"/>
</dbReference>
<dbReference type="Gene3D" id="3.30.1360.120">
    <property type="entry name" value="Probable tRNA modification gtpase trme, domain 1"/>
    <property type="match status" value="1"/>
</dbReference>
<dbReference type="InterPro" id="IPR027266">
    <property type="entry name" value="TrmE/GcvT_dom1"/>
</dbReference>
<dbReference type="InterPro" id="IPR045179">
    <property type="entry name" value="YgfZ/GcvT"/>
</dbReference>
<dbReference type="InterPro" id="IPR017703">
    <property type="entry name" value="YgfZ/GcvT_CS"/>
</dbReference>
<dbReference type="NCBIfam" id="TIGR03317">
    <property type="entry name" value="ygfZ_signature"/>
    <property type="match status" value="1"/>
</dbReference>
<dbReference type="PANTHER" id="PTHR22602">
    <property type="entry name" value="TRANSFERASE CAF17, MITOCHONDRIAL-RELATED"/>
    <property type="match status" value="1"/>
</dbReference>
<dbReference type="PANTHER" id="PTHR22602:SF0">
    <property type="entry name" value="TRANSFERASE CAF17, MITOCHONDRIAL-RELATED"/>
    <property type="match status" value="1"/>
</dbReference>
<dbReference type="Pfam" id="PF25455">
    <property type="entry name" value="Beta-barrel_CAF17_C"/>
    <property type="match status" value="1"/>
</dbReference>
<dbReference type="SUPFAM" id="SSF103025">
    <property type="entry name" value="Folate-binding domain"/>
    <property type="match status" value="1"/>
</dbReference>
<keyword id="KW-0496">Mitochondrion</keyword>
<keyword id="KW-1185">Reference proteome</keyword>
<keyword id="KW-0809">Transit peptide</keyword>
<comment type="subcellular location">
    <subcellularLocation>
        <location evidence="1">Mitochondrion matrix</location>
    </subcellularLocation>
</comment>
<comment type="similarity">
    <text evidence="3">Belongs to the GcvT family. CAF17/IBA57 subfamily.</text>
</comment>
<proteinExistence type="inferred from homology"/>
<accession>A1CBI9</accession>